<keyword id="KW-1015">Disulfide bond</keyword>
<keyword id="KW-0964">Secreted</keyword>
<keyword id="KW-0732">Signal</keyword>
<comment type="subcellular location">
    <subcellularLocation>
        <location evidence="1">Secreted</location>
    </subcellularLocation>
</comment>
<comment type="tissue specificity">
    <text evidence="3">Expressed by the venom gland.</text>
</comment>
<comment type="PTM">
    <text evidence="1">Contains 1 disulfide bond.</text>
</comment>
<proteinExistence type="inferred from homology"/>
<accession>P0CJ05</accession>
<name>VP271_LYCMC</name>
<reference key="1">
    <citation type="journal article" date="2010" name="BMC Genomics">
        <title>Comparative venom gland transcriptome analysis of the scorpion Lychas mucronatus reveals intraspecific toxic gene diversity and new venomous components.</title>
        <authorList>
            <person name="Zhao R."/>
            <person name="Ma Y."/>
            <person name="He Y."/>
            <person name="Di Z."/>
            <person name="Wu Y.-L."/>
            <person name="Cao Z.-J."/>
            <person name="Li W.-X."/>
        </authorList>
    </citation>
    <scope>NUCLEOTIDE SEQUENCE [MRNA]</scope>
    <source>
        <strain>Yunnan</strain>
        <tissue>Venom gland</tissue>
    </source>
</reference>
<sequence>MNTKTLIVVFLVCLLVSEVVLARRCGGGRKIKIKKIVRKLRPIVRVMKVITRMRTRRPRPRPCNSS</sequence>
<organism>
    <name type="scientific">Lychas mucronatus</name>
    <name type="common">Chinese swimming scorpion</name>
    <dbReference type="NCBI Taxonomy" id="172552"/>
    <lineage>
        <taxon>Eukaryota</taxon>
        <taxon>Metazoa</taxon>
        <taxon>Ecdysozoa</taxon>
        <taxon>Arthropoda</taxon>
        <taxon>Chelicerata</taxon>
        <taxon>Arachnida</taxon>
        <taxon>Scorpiones</taxon>
        <taxon>Buthida</taxon>
        <taxon>Buthoidea</taxon>
        <taxon>Buthidae</taxon>
        <taxon>Lychas</taxon>
    </lineage>
</organism>
<evidence type="ECO:0000250" key="1"/>
<evidence type="ECO:0000255" key="2"/>
<evidence type="ECO:0000305" key="3"/>
<dbReference type="EMBL" id="GT028802">
    <property type="status" value="NOT_ANNOTATED_CDS"/>
    <property type="molecule type" value="mRNA"/>
</dbReference>
<dbReference type="EMBL" id="GT028805">
    <property type="status" value="NOT_ANNOTATED_CDS"/>
    <property type="molecule type" value="mRNA"/>
</dbReference>
<dbReference type="SMR" id="P0CJ05"/>
<dbReference type="GO" id="GO:0005576">
    <property type="term" value="C:extracellular region"/>
    <property type="evidence" value="ECO:0007669"/>
    <property type="project" value="UniProtKB-SubCell"/>
</dbReference>
<feature type="signal peptide" evidence="2">
    <location>
        <begin position="1"/>
        <end position="22"/>
    </location>
</feature>
<feature type="chain" id="PRO_0000403896" description="Venom protein 27.1">
    <location>
        <begin position="23"/>
        <end position="66"/>
    </location>
</feature>
<feature type="sequence conflict" description="In Ref. 1; GT028805." evidence="3" ref="1">
    <original>K</original>
    <variation>R</variation>
    <location>
        <position position="34"/>
    </location>
</feature>
<protein>
    <recommendedName>
        <fullName>Venom protein 27.1</fullName>
    </recommendedName>
</protein>